<dbReference type="EMBL" id="M93123">
    <property type="protein sequence ID" value="AAA02903.1"/>
    <property type="molecule type" value="Unassigned_DNA"/>
</dbReference>
<dbReference type="EMBL" id="X59720">
    <property type="protein sequence ID" value="CAA42313.1"/>
    <property type="molecule type" value="Genomic_DNA"/>
</dbReference>
<dbReference type="EMBL" id="BK006937">
    <property type="protein sequence ID" value="DAA07500.1"/>
    <property type="molecule type" value="Genomic_DNA"/>
</dbReference>
<dbReference type="PIR" id="S31848">
    <property type="entry name" value="S31848"/>
</dbReference>
<dbReference type="RefSeq" id="NP_009950.1">
    <property type="nucleotide sequence ID" value="NM_001178735.1"/>
</dbReference>
<dbReference type="SMR" id="P25619"/>
<dbReference type="BioGRID" id="31004">
    <property type="interactions" value="133"/>
</dbReference>
<dbReference type="DIP" id="DIP-4586N"/>
<dbReference type="FunCoup" id="P25619">
    <property type="interactions" value="110"/>
</dbReference>
<dbReference type="IntAct" id="P25619">
    <property type="interactions" value="34"/>
</dbReference>
<dbReference type="MINT" id="P25619"/>
<dbReference type="STRING" id="4932.YCR021C"/>
<dbReference type="TCDB" id="3.E.1.4.1">
    <property type="family name" value="the ion-translocating microbial rhodopsin (mr) family"/>
</dbReference>
<dbReference type="iPTMnet" id="P25619"/>
<dbReference type="PaxDb" id="4932-YCR021C"/>
<dbReference type="PeptideAtlas" id="P25619"/>
<dbReference type="EnsemblFungi" id="YCR021C_mRNA">
    <property type="protein sequence ID" value="YCR021C"/>
    <property type="gene ID" value="YCR021C"/>
</dbReference>
<dbReference type="GeneID" id="850385"/>
<dbReference type="KEGG" id="sce:YCR021C"/>
<dbReference type="AGR" id="SGD:S000000615"/>
<dbReference type="SGD" id="S000000615">
    <property type="gene designation" value="HSP30"/>
</dbReference>
<dbReference type="VEuPathDB" id="FungiDB:YCR021C"/>
<dbReference type="eggNOG" id="ENOG502QZWT">
    <property type="taxonomic scope" value="Eukaryota"/>
</dbReference>
<dbReference type="HOGENOM" id="CLU_054785_1_1_1"/>
<dbReference type="InParanoid" id="P25619"/>
<dbReference type="OMA" id="IAWFLSW"/>
<dbReference type="OrthoDB" id="536545at2759"/>
<dbReference type="BioCyc" id="YEAST:G3O-29337-MONOMER"/>
<dbReference type="BioGRID-ORCS" id="850385">
    <property type="hits" value="9 hits in 10 CRISPR screens"/>
</dbReference>
<dbReference type="PRO" id="PR:P25619"/>
<dbReference type="Proteomes" id="UP000002311">
    <property type="component" value="Chromosome III"/>
</dbReference>
<dbReference type="RNAct" id="P25619">
    <property type="molecule type" value="protein"/>
</dbReference>
<dbReference type="GO" id="GO:0005783">
    <property type="term" value="C:endoplasmic reticulum"/>
    <property type="evidence" value="ECO:0007005"/>
    <property type="project" value="SGD"/>
</dbReference>
<dbReference type="GO" id="GO:0005886">
    <property type="term" value="C:plasma membrane"/>
    <property type="evidence" value="ECO:0000314"/>
    <property type="project" value="SGD"/>
</dbReference>
<dbReference type="CDD" id="cd15239">
    <property type="entry name" value="7tm_YRO2_fungal-like"/>
    <property type="match status" value="1"/>
</dbReference>
<dbReference type="FunFam" id="1.20.1070.10:FF:000160">
    <property type="entry name" value="Related to Opsin-1"/>
    <property type="match status" value="1"/>
</dbReference>
<dbReference type="Gene3D" id="1.20.1070.10">
    <property type="entry name" value="Rhodopsin 7-helix transmembrane proteins"/>
    <property type="match status" value="1"/>
</dbReference>
<dbReference type="InterPro" id="IPR001425">
    <property type="entry name" value="Arc/bac/fun_rhodopsins"/>
</dbReference>
<dbReference type="InterPro" id="IPR043476">
    <property type="entry name" value="Yro2-like_7TM"/>
</dbReference>
<dbReference type="PANTHER" id="PTHR28286">
    <property type="match status" value="1"/>
</dbReference>
<dbReference type="PANTHER" id="PTHR28286:SF1">
    <property type="entry name" value="30 KDA HEAT SHOCK PROTEIN-RELATED"/>
    <property type="match status" value="1"/>
</dbReference>
<dbReference type="Pfam" id="PF01036">
    <property type="entry name" value="Bac_rhodopsin"/>
    <property type="match status" value="1"/>
</dbReference>
<dbReference type="SMART" id="SM01021">
    <property type="entry name" value="Bac_rhodopsin"/>
    <property type="match status" value="1"/>
</dbReference>
<dbReference type="SUPFAM" id="SSF81321">
    <property type="entry name" value="Family A G protein-coupled receptor-like"/>
    <property type="match status" value="1"/>
</dbReference>
<sequence>MNDTLSSFLNRNEALGLNPPHGLDMHITKRGSDWLWAVFAVFGFILLCYVVMFFIAENKGSRLTRYALAPAFLITFFEFFAFFTYASDLGWTGVQAEFNHVKVSKSITGEVPGIRQIFYSKYIAWFLSWPCLLFLIELAASTTGENDDISALDMVHSLLIQIVGTLFWVVSLLVGSLIKSTYKWGYYTIGAVAMLVTQGVICQRQFFNLKTRGFNALMLCTCMVIVWLYFICWGLSDGGNRIQPDGEAIFYGVLDLCVFAIYPCYLLIAVSRDGKLPRLSLTGGFSHHHATDDVEDAAPETKEAVPESPRASGETAIHEPEPEAEQAVEDTA</sequence>
<reference key="1">
    <citation type="journal article" date="1993" name="Curr. Genet.">
        <title>Isolation and sequence of HSP30, a yeast heat-shock gene coding for a hydrophobic membrane protein.</title>
        <authorList>
            <person name="Regnacq M."/>
            <person name="Boucherie H."/>
        </authorList>
    </citation>
    <scope>NUCLEOTIDE SEQUENCE</scope>
    <source>
        <strain>ATCC 44827 / SKQ2N</strain>
    </source>
</reference>
<reference key="2">
    <citation type="journal article" date="1992" name="Nature">
        <title>The complete DNA sequence of yeast chromosome III.</title>
        <authorList>
            <person name="Oliver S.G."/>
            <person name="van der Aart Q.J.M."/>
            <person name="Agostoni-Carbone M.L."/>
            <person name="Aigle M."/>
            <person name="Alberghina L."/>
            <person name="Alexandraki D."/>
            <person name="Antoine G."/>
            <person name="Anwar R."/>
            <person name="Ballesta J.P.G."/>
            <person name="Benit P."/>
            <person name="Berben G."/>
            <person name="Bergantino E."/>
            <person name="Biteau N."/>
            <person name="Bolle P.-A."/>
            <person name="Bolotin-Fukuhara M."/>
            <person name="Brown A."/>
            <person name="Brown A.J.P."/>
            <person name="Buhler J.-M."/>
            <person name="Carcano C."/>
            <person name="Carignani G."/>
            <person name="Cederberg H."/>
            <person name="Chanet R."/>
            <person name="Contreras R."/>
            <person name="Crouzet M."/>
            <person name="Daignan-Fornier B."/>
            <person name="Defoor E."/>
            <person name="Delgado M.D."/>
            <person name="Demolder J."/>
            <person name="Doira C."/>
            <person name="Dubois E."/>
            <person name="Dujon B."/>
            <person name="Duesterhoeft A."/>
            <person name="Erdmann D."/>
            <person name="Esteban M."/>
            <person name="Fabre F."/>
            <person name="Fairhead C."/>
            <person name="Faye G."/>
            <person name="Feldmann H."/>
            <person name="Fiers W."/>
            <person name="Francingues-Gaillard M.-C."/>
            <person name="Franco L."/>
            <person name="Frontali L."/>
            <person name="Fukuhara H."/>
            <person name="Fuller L.J."/>
            <person name="Galland P."/>
            <person name="Gent M.E."/>
            <person name="Gigot D."/>
            <person name="Gilliquet V."/>
            <person name="Glansdorff N."/>
            <person name="Goffeau A."/>
            <person name="Grenson M."/>
            <person name="Grisanti P."/>
            <person name="Grivell L.A."/>
            <person name="de Haan M."/>
            <person name="Haasemann M."/>
            <person name="Hatat D."/>
            <person name="Hoenicka J."/>
            <person name="Hegemann J.H."/>
            <person name="Herbert C.J."/>
            <person name="Hilger F."/>
            <person name="Hohmann S."/>
            <person name="Hollenberg C.P."/>
            <person name="Huse K."/>
            <person name="Iborra F."/>
            <person name="Indge K.J."/>
            <person name="Isono K."/>
            <person name="Jacq C."/>
            <person name="Jacquet M."/>
            <person name="James C.M."/>
            <person name="Jauniaux J.-C."/>
            <person name="Jia Y."/>
            <person name="Jimenez A."/>
            <person name="Kelly A."/>
            <person name="Kleinhans U."/>
            <person name="Kreisl P."/>
            <person name="Lanfranchi G."/>
            <person name="Lewis C."/>
            <person name="van der Linden C.G."/>
            <person name="Lucchini G."/>
            <person name="Lutzenkirchen K."/>
            <person name="Maat M.J."/>
            <person name="Mallet L."/>
            <person name="Mannhaupt G."/>
            <person name="Martegani E."/>
            <person name="Mathieu A."/>
            <person name="Maurer C.T.C."/>
            <person name="McConnell D."/>
            <person name="McKee R.A."/>
            <person name="Messenguy F."/>
            <person name="Mewes H.-W."/>
            <person name="Molemans F."/>
            <person name="Montague M.A."/>
            <person name="Muzi Falconi M."/>
            <person name="Navas L."/>
            <person name="Newlon C.S."/>
            <person name="Noone D."/>
            <person name="Pallier C."/>
            <person name="Panzeri L."/>
            <person name="Pearson B.M."/>
            <person name="Perea J."/>
            <person name="Philippsen P."/>
            <person name="Pierard A."/>
            <person name="Planta R.J."/>
            <person name="Plevani P."/>
            <person name="Poetsch B."/>
            <person name="Pohl F.M."/>
            <person name="Purnelle B."/>
            <person name="Ramezani Rad M."/>
            <person name="Rasmussen S.W."/>
            <person name="Raynal A."/>
            <person name="Remacha M.A."/>
            <person name="Richterich P."/>
            <person name="Roberts A.B."/>
            <person name="Rodriguez F."/>
            <person name="Sanz E."/>
            <person name="Schaaff-Gerstenschlaeger I."/>
            <person name="Scherens B."/>
            <person name="Schweitzer B."/>
            <person name="Shu Y."/>
            <person name="Skala J."/>
            <person name="Slonimski P.P."/>
            <person name="Sor F."/>
            <person name="Soustelle C."/>
            <person name="Spiegelberg R."/>
            <person name="Stateva L.I."/>
            <person name="Steensma H.Y."/>
            <person name="Steiner S."/>
            <person name="Thierry A."/>
            <person name="Thireos G."/>
            <person name="Tzermia M."/>
            <person name="Urrestarazu L.A."/>
            <person name="Valle G."/>
            <person name="Vetter I."/>
            <person name="van Vliet-Reedijk J.C."/>
            <person name="Voet M."/>
            <person name="Volckaert G."/>
            <person name="Vreken P."/>
            <person name="Wang H."/>
            <person name="Warmington J.R."/>
            <person name="von Wettstein D."/>
            <person name="Wicksteed B.L."/>
            <person name="Wilson C."/>
            <person name="Wurst H."/>
            <person name="Xu G."/>
            <person name="Yoshikawa A."/>
            <person name="Zimmermann F.K."/>
            <person name="Sgouros J.G."/>
        </authorList>
    </citation>
    <scope>NUCLEOTIDE SEQUENCE [LARGE SCALE GENOMIC DNA]</scope>
    <source>
        <strain>ATCC 204508 / S288c</strain>
    </source>
</reference>
<reference key="3">
    <citation type="journal article" date="2014" name="G3 (Bethesda)">
        <title>The reference genome sequence of Saccharomyces cerevisiae: Then and now.</title>
        <authorList>
            <person name="Engel S.R."/>
            <person name="Dietrich F.S."/>
            <person name="Fisk D.G."/>
            <person name="Binkley G."/>
            <person name="Balakrishnan R."/>
            <person name="Costanzo M.C."/>
            <person name="Dwight S.S."/>
            <person name="Hitz B.C."/>
            <person name="Karra K."/>
            <person name="Nash R.S."/>
            <person name="Weng S."/>
            <person name="Wong E.D."/>
            <person name="Lloyd P."/>
            <person name="Skrzypek M.S."/>
            <person name="Miyasato S.R."/>
            <person name="Simison M."/>
            <person name="Cherry J.M."/>
        </authorList>
    </citation>
    <scope>GENOME REANNOTATION</scope>
    <source>
        <strain>ATCC 204508 / S288c</strain>
    </source>
</reference>
<reference key="4">
    <citation type="journal article" date="2003" name="Nature">
        <title>Global analysis of protein expression in yeast.</title>
        <authorList>
            <person name="Ghaemmaghami S."/>
            <person name="Huh W.-K."/>
            <person name="Bower K."/>
            <person name="Howson R.W."/>
            <person name="Belle A."/>
            <person name="Dephoure N."/>
            <person name="O'Shea E.K."/>
            <person name="Weissman J.S."/>
        </authorList>
    </citation>
    <scope>LEVEL OF PROTEIN EXPRESSION [LARGE SCALE ANALYSIS]</scope>
</reference>
<reference key="5">
    <citation type="journal article" date="2006" name="Proc. Natl. Acad. Sci. U.S.A.">
        <title>A global topology map of the Saccharomyces cerevisiae membrane proteome.</title>
        <authorList>
            <person name="Kim H."/>
            <person name="Melen K."/>
            <person name="Oesterberg M."/>
            <person name="von Heijne G."/>
        </authorList>
    </citation>
    <scope>TOPOLOGY [LARGE SCALE ANALYSIS]</scope>
    <source>
        <strain>ATCC 208353 / W303-1A</strain>
    </source>
</reference>
<reference key="6">
    <citation type="journal article" date="2008" name="Mol. Cell. Proteomics">
        <title>A multidimensional chromatography technology for in-depth phosphoproteome analysis.</title>
        <authorList>
            <person name="Albuquerque C.P."/>
            <person name="Smolka M.B."/>
            <person name="Payne S.H."/>
            <person name="Bafna V."/>
            <person name="Eng J."/>
            <person name="Zhou H."/>
        </authorList>
    </citation>
    <scope>PHOSPHORYLATION [LARGE SCALE ANALYSIS] AT THR-331</scope>
    <scope>IDENTIFICATION BY MASS SPECTROMETRY [LARGE SCALE ANALYSIS]</scope>
</reference>
<reference key="7">
    <citation type="journal article" date="2009" name="Science">
        <title>Global analysis of Cdk1 substrate phosphorylation sites provides insights into evolution.</title>
        <authorList>
            <person name="Holt L.J."/>
            <person name="Tuch B.B."/>
            <person name="Villen J."/>
            <person name="Johnson A.D."/>
            <person name="Gygi S.P."/>
            <person name="Morgan D.O."/>
        </authorList>
    </citation>
    <scope>PHOSPHORYLATION [LARGE SCALE ANALYSIS] AT SER-308</scope>
    <scope>IDENTIFICATION BY MASS SPECTROMETRY [LARGE SCALE ANALYSIS]</scope>
</reference>
<feature type="chain" id="PRO_0000196284" description="30 kDa heat shock protein">
    <location>
        <begin position="1"/>
        <end position="332"/>
    </location>
</feature>
<feature type="topological domain" description="Extracellular" evidence="1">
    <location>
        <begin position="1"/>
        <end position="34"/>
    </location>
</feature>
<feature type="transmembrane region" description="Helical" evidence="1">
    <location>
        <begin position="35"/>
        <end position="55"/>
    </location>
</feature>
<feature type="topological domain" description="Cytoplasmic" evidence="1">
    <location>
        <begin position="56"/>
        <end position="65"/>
    </location>
</feature>
<feature type="transmembrane region" description="Helical" evidence="1">
    <location>
        <begin position="66"/>
        <end position="86"/>
    </location>
</feature>
<feature type="topological domain" description="Extracellular" evidence="1">
    <location>
        <begin position="87"/>
        <end position="121"/>
    </location>
</feature>
<feature type="transmembrane region" description="Helical" evidence="1">
    <location>
        <begin position="122"/>
        <end position="142"/>
    </location>
</feature>
<feature type="topological domain" description="Cytoplasmic" evidence="1">
    <location>
        <begin position="143"/>
        <end position="157"/>
    </location>
</feature>
<feature type="transmembrane region" description="Helical" evidence="1">
    <location>
        <begin position="158"/>
        <end position="178"/>
    </location>
</feature>
<feature type="topological domain" description="Extracellular" evidence="1">
    <location>
        <begin position="179"/>
        <end position="181"/>
    </location>
</feature>
<feature type="transmembrane region" description="Helical" evidence="1">
    <location>
        <begin position="182"/>
        <end position="202"/>
    </location>
</feature>
<feature type="topological domain" description="Cytoplasmic" evidence="1">
    <location>
        <begin position="203"/>
        <end position="215"/>
    </location>
</feature>
<feature type="transmembrane region" description="Helical" evidence="1">
    <location>
        <begin position="216"/>
        <end position="236"/>
    </location>
</feature>
<feature type="topological domain" description="Extracellular" evidence="1">
    <location>
        <begin position="237"/>
        <end position="248"/>
    </location>
</feature>
<feature type="transmembrane region" description="Helical" evidence="1">
    <location>
        <begin position="249"/>
        <end position="269"/>
    </location>
</feature>
<feature type="topological domain" description="Cytoplasmic" evidence="1">
    <location>
        <begin position="270"/>
        <end position="332"/>
    </location>
</feature>
<feature type="region of interest" description="Disordered" evidence="2">
    <location>
        <begin position="290"/>
        <end position="332"/>
    </location>
</feature>
<feature type="compositionally biased region" description="Acidic residues" evidence="2">
    <location>
        <begin position="322"/>
        <end position="332"/>
    </location>
</feature>
<feature type="modified residue" description="Phosphoserine" evidence="6">
    <location>
        <position position="308"/>
    </location>
</feature>
<feature type="modified residue" description="Phosphothreonine" evidence="5">
    <location>
        <position position="331"/>
    </location>
</feature>
<comment type="function">
    <text>Probably cooperates with other heat shock proteins in the translocation of polypeptides through membranes. It may counteract the altering effect of heat shock on the plasma membrane.</text>
</comment>
<comment type="subcellular location">
    <subcellularLocation>
        <location>Membrane</location>
        <topology>Multi-pass membrane protein</topology>
    </subcellularLocation>
</comment>
<comment type="developmental stage">
    <text>Expressed during the entry into stationary phase resulting from glucose limitation.</text>
</comment>
<comment type="miscellaneous">
    <text evidence="3">Present with 7800 molecules/cell in log phase SD medium.</text>
</comment>
<comment type="similarity">
    <text evidence="4">Belongs to the archaeal/bacterial/fungal opsin family.</text>
</comment>
<gene>
    <name type="primary">HSP30</name>
    <name type="ordered locus">YCR021C</name>
    <name type="ORF">YCR21C</name>
</gene>
<evidence type="ECO:0000255" key="1"/>
<evidence type="ECO:0000256" key="2">
    <source>
        <dbReference type="SAM" id="MobiDB-lite"/>
    </source>
</evidence>
<evidence type="ECO:0000269" key="3">
    <source>
    </source>
</evidence>
<evidence type="ECO:0000305" key="4"/>
<evidence type="ECO:0007744" key="5">
    <source>
    </source>
</evidence>
<evidence type="ECO:0007744" key="6">
    <source>
    </source>
</evidence>
<organism>
    <name type="scientific">Saccharomyces cerevisiae (strain ATCC 204508 / S288c)</name>
    <name type="common">Baker's yeast</name>
    <dbReference type="NCBI Taxonomy" id="559292"/>
    <lineage>
        <taxon>Eukaryota</taxon>
        <taxon>Fungi</taxon>
        <taxon>Dikarya</taxon>
        <taxon>Ascomycota</taxon>
        <taxon>Saccharomycotina</taxon>
        <taxon>Saccharomycetes</taxon>
        <taxon>Saccharomycetales</taxon>
        <taxon>Saccharomycetaceae</taxon>
        <taxon>Saccharomyces</taxon>
    </lineage>
</organism>
<name>HSP30_YEAST</name>
<protein>
    <recommendedName>
        <fullName>30 kDa heat shock protein</fullName>
    </recommendedName>
</protein>
<keyword id="KW-0472">Membrane</keyword>
<keyword id="KW-0597">Phosphoprotein</keyword>
<keyword id="KW-1185">Reference proteome</keyword>
<keyword id="KW-0346">Stress response</keyword>
<keyword id="KW-0812">Transmembrane</keyword>
<keyword id="KW-1133">Transmembrane helix</keyword>
<accession>P25619</accession>
<accession>D6VR31</accession>
<accession>Q04556</accession>
<proteinExistence type="evidence at protein level"/>